<sequence>MEDDDTLNGEYFQPVEDMITLPILTEESLLLNLKMRYKKKEIYTYTGSILVAVNPYEILPIYTADIVKSYFAKSRNLMLPHIFAVSDAAFTNMIEEGKNQSIIISGESGAGKTESTKLIIQYLAARTNRHSQVEQMIVESSPILEAFGNAKTIRNNNSSRFGKFIEIQFNREGHISGARIINYLLEKSRISHQASSERNYHIFYQLLAGASDELKEKLKLGEPEDYHYLSQSGCIRIENINDVEDFEHVKYAMNVLGLPEDKQFTIFSIVSAVLHIGNLKFEKSEKTQGAEGSEVSNKDTLKIIAQLLSVDPVKLETCLTIRHVLIRGQNFVIPLKVNEAEDTRDSLAKALYGNVFNWLVVFINSKIHKPQKNSTFIGVLDIFGFENFKKNSFEQFCINFANEKLQQHFNQHIFKLEQEEYEKEKINWSKIVYNDNQECLDLIEKRPLGILSLLDEESRFPQATDLTYLDKLHTNHEKHPYYEKPRRSKNTFVVKHYAGEVHYDTQGFLDKNKDTVSDDLSSLLQGSKSKFIIELFTPPREEGDDSDKGREKKKTTAGQTFKTQLQSLINILSSTQPHYVRCIKPNTTKEPAVYDRELIQAQLRYAGMMETIRIRKLGYPIRHTHKEFRDRYLILDYRARSTDHKQTCAGLINLLSGTGGLERDEWQLGNTKVFIRDHQYLKLEELRKLKLLKKVTLIQSVWRMYRCKKRYQQIRASAKILGAAMLSHSSRRDFQEQRQAVQRIKGFFKMLTYQKQFKIIQINLRIVQNNIRSFIARRHSRNAVLLKRDRNARMLEIQREKDEEERNRQEKEERDRQEKEDKEKETADRRQLQEEQKRREEELRAKREEEELKKLEEKKSQLKELNQIDELSSLERMLKEQQDKNINELDDFVNSLEAFSFEGGVDDSQPYSFNHKMYEMSPEALDKISITDLLQGLKQTVRSVTKFEVDESKFELPPGIENVLKRAPGIKRQASSFLPGQPIPDVYSSPQYPVDEADDDDSNNNYINSNNGDLPLPTSQSSDFSLPPPPSSSSMDFGLPPPPPSSSSGGTYSLPPMPVFDFGMIDPILGAPPPPPSTSDSTSPSATATGNNTPNSSSASASQSTNQVNPQPTVSVVELPQILNDEEISLYSFYDYANKNFNIEKLKQKDDIFSYQKSHIKSSLLVHSDAEQTKVAVEIFSKVLHYMNSNPLVSKKDPADFYSPVKFILTKGLAIESLRDEIYCQLIKQSTSNPIQDLNIRVWELIHFTCSTFPPTRKLIKYFAAYLKTTIQQSDVSKSVKDSAQASYFILQRFTLNGARKQVPSVTELESIKENRPIFVRITATDGSLKGLHIDSATTCQESSNDLSQRSRMRVNSKENGFTIIESFNGIERDIAPTDKLCDVLSKVENLQATLSSKIQVNFKFVFKKKLFFDNITNNVPTTSINVENEFYYHQLFNDLFNSNYCKDQDYQISIGSLKLQFESSDYTDEIRAWLPGNGRGKYFTTDIEKNRFDDFINKYKSHKGLSPEDAKKQMVQLLEKHPLANCSLVVCEHQSESLPYPKNFVLALNVNGINIYDPATSKMLESVKYSNQSQQNLKSDDKSVSIILENKSTLQAFTGDVQKLVSLIKEYSLYLRNNAKYARALKDYNVSDTSLLPFKRNDIITITFKDQENKWFMGQLNGKEGSFPVDHVEILLSDVPPPQPVHPVATLSPPMSPTIPNITNTPPPPPSISDSMSPPPQVGMLPPPPPPSVMGSTKPIEIPSLGIPPPPPSSSNSSVPNSPIGSPMMGIPPPPPTISVHSLSNSGNSTPPPPLPSLSTPPTLSTPPPISSPPNFRSSLRVSMLNTSNDGGDNSSDDPSKRLTVSPAIGTDSQLAQWASTRFRSFKRASTLNQQQATLKRKAPVDPNTAFYFNKDPIKESLIEMEAKLSKKAIKNFSEIMMWMGDYPIPKGQTASLVIQSIISRGIENHELRDEIYCQAYRQTNKNPKVESAKKGFELIYFLSITFSPSDSLLQPFMEQLMSRNIAIQSSSPQLASLIAVCIEKLESHPIPSYQQRKMGPSATEIQSFRSNLENGDISTCKIRFIDQSTKLAKINTYTTIREITDTVCRQYGISQQSIKMFGISAVNETAGISKVVSETDMIYDVLARWEQSEEKGEFYFQVRRRFFLDDVNKILDQEHLWTDDDICFELTYCQIRDEWMKGLYTNVNEKDSSIIAAILIQLLYPNQSKLVLTKEVVRQVLPDQILNSQNIKVWISMIESQIFELVSQTPEYLKLMFINLIGSKSPLFGCTLFNIQQKENPPKAWLAINKKGVSIFDPHTKESKNFWTFQSISNVAFTDDTFCIMTGNLMKPIKQTFTTDEHSSIASVYQFYSSQ</sequence>
<comment type="function">
    <text evidence="9 10 11">Myosins are actin-based motor molecules with ATPase activity. Involved in the early steps of phagocytosis and adhesion.</text>
</comment>
<comment type="subunit">
    <text evidence="11 12">Monomer. Interacts with talA.</text>
</comment>
<comment type="subcellular location">
    <subcellularLocation>
        <location evidence="10">Cytoplasm</location>
    </subcellularLocation>
    <text>Enriched in filopodia.</text>
</comment>
<comment type="domain">
    <text evidence="12">The coiled-coil and the proline-rich region are responsible to the binding to talA.</text>
</comment>
<comment type="similarity">
    <text evidence="13">Belongs to the TRAFAC class myosin-kinesin ATPase superfamily. Myosin family.</text>
</comment>
<comment type="sequence caution" evidence="13">
    <conflict type="erroneous initiation">
        <sequence resource="EMBL-CDS" id="AAB40932"/>
    </conflict>
</comment>
<name>MYOI_DICDI</name>
<proteinExistence type="evidence at protein level"/>
<feature type="chain" id="PRO_0000328606" description="Myosin-I heavy chain">
    <location>
        <begin position="1"/>
        <end position="2357"/>
    </location>
</feature>
<feature type="domain" description="Myosin motor" evidence="7">
    <location>
        <begin position="13"/>
        <end position="688"/>
    </location>
</feature>
<feature type="domain" description="IQ" evidence="4">
    <location>
        <begin position="691"/>
        <end position="720"/>
    </location>
</feature>
<feature type="domain" description="MyTH4 1" evidence="6">
    <location>
        <begin position="1155"/>
        <end position="1313"/>
    </location>
</feature>
<feature type="domain" description="FERM 1" evidence="3">
    <location>
        <begin position="1318"/>
        <end position="1620"/>
    </location>
</feature>
<feature type="domain" description="SH3" evidence="5">
    <location>
        <begin position="1618"/>
        <end position="1678"/>
    </location>
</feature>
<feature type="domain" description="MyTH4 2" evidence="6">
    <location>
        <begin position="1894"/>
        <end position="2051"/>
    </location>
</feature>
<feature type="domain" description="FERM 2" evidence="3">
    <location>
        <begin position="2060"/>
        <end position="2357"/>
    </location>
</feature>
<feature type="region of interest" description="Actin-binding" evidence="1">
    <location>
        <begin position="579"/>
        <end position="586"/>
    </location>
</feature>
<feature type="region of interest" description="Binding to talin A">
    <location>
        <begin position="787"/>
        <end position="1076"/>
    </location>
</feature>
<feature type="region of interest" description="Disordered" evidence="8">
    <location>
        <begin position="797"/>
        <end position="852"/>
    </location>
</feature>
<feature type="region of interest" description="Disordered" evidence="8">
    <location>
        <begin position="974"/>
        <end position="1112"/>
    </location>
</feature>
<feature type="region of interest" description="Disordered" evidence="8">
    <location>
        <begin position="1686"/>
        <end position="1849"/>
    </location>
</feature>
<feature type="coiled-coil region" evidence="2">
    <location>
        <begin position="787"/>
        <end position="891"/>
    </location>
</feature>
<feature type="compositionally biased region" description="Low complexity" evidence="8">
    <location>
        <begin position="1003"/>
        <end position="1025"/>
    </location>
</feature>
<feature type="compositionally biased region" description="Low complexity" evidence="8">
    <location>
        <begin position="1078"/>
        <end position="1106"/>
    </location>
</feature>
<feature type="compositionally biased region" description="Pro residues" evidence="8">
    <location>
        <begin position="1706"/>
        <end position="1733"/>
    </location>
</feature>
<feature type="compositionally biased region" description="Low complexity" evidence="8">
    <location>
        <begin position="1734"/>
        <end position="1746"/>
    </location>
</feature>
<feature type="compositionally biased region" description="Low complexity" evidence="8">
    <location>
        <begin position="1755"/>
        <end position="1770"/>
    </location>
</feature>
<feature type="compositionally biased region" description="Polar residues" evidence="8">
    <location>
        <begin position="1817"/>
        <end position="1828"/>
    </location>
</feature>
<feature type="binding site" evidence="1">
    <location>
        <begin position="106"/>
        <end position="113"/>
    </location>
    <ligand>
        <name>ATP</name>
        <dbReference type="ChEBI" id="CHEBI:30616"/>
    </ligand>
</feature>
<feature type="helix" evidence="18">
    <location>
        <begin position="1125"/>
        <end position="1127"/>
    </location>
</feature>
<feature type="turn" evidence="18">
    <location>
        <begin position="1128"/>
        <end position="1130"/>
    </location>
</feature>
<feature type="helix" evidence="18">
    <location>
        <begin position="1133"/>
        <end position="1140"/>
    </location>
</feature>
<feature type="helix" evidence="18">
    <location>
        <begin position="1144"/>
        <end position="1146"/>
    </location>
</feature>
<feature type="strand" evidence="18">
    <location>
        <begin position="1152"/>
        <end position="1154"/>
    </location>
</feature>
<feature type="helix" evidence="18">
    <location>
        <begin position="1170"/>
        <end position="1187"/>
    </location>
</feature>
<feature type="helix" evidence="18">
    <location>
        <begin position="1193"/>
        <end position="1196"/>
    </location>
</feature>
<feature type="helix" evidence="18">
    <location>
        <begin position="1198"/>
        <end position="1214"/>
    </location>
</feature>
<feature type="helix" evidence="18">
    <location>
        <begin position="1216"/>
        <end position="1218"/>
    </location>
</feature>
<feature type="helix" evidence="18">
    <location>
        <begin position="1219"/>
        <end position="1229"/>
    </location>
</feature>
<feature type="helix" evidence="18">
    <location>
        <begin position="1236"/>
        <end position="1250"/>
    </location>
</feature>
<feature type="turn" evidence="18">
    <location>
        <begin position="1257"/>
        <end position="1259"/>
    </location>
</feature>
<feature type="helix" evidence="18">
    <location>
        <begin position="1260"/>
        <end position="1272"/>
    </location>
</feature>
<feature type="helix" evidence="18">
    <location>
        <begin position="1278"/>
        <end position="1297"/>
    </location>
</feature>
<feature type="helix" evidence="18">
    <location>
        <begin position="1306"/>
        <end position="1313"/>
    </location>
</feature>
<feature type="strand" evidence="18">
    <location>
        <begin position="1318"/>
        <end position="1324"/>
    </location>
</feature>
<feature type="strand" evidence="18">
    <location>
        <begin position="1329"/>
        <end position="1334"/>
    </location>
</feature>
<feature type="helix" evidence="18">
    <location>
        <begin position="1340"/>
        <end position="1350"/>
    </location>
</feature>
<feature type="helix" evidence="18">
    <location>
        <begin position="1357"/>
        <end position="1360"/>
    </location>
</feature>
<feature type="strand" evidence="18">
    <location>
        <begin position="1362"/>
        <end position="1368"/>
    </location>
</feature>
<feature type="strand" evidence="18">
    <location>
        <begin position="1371"/>
        <end position="1373"/>
    </location>
</feature>
<feature type="helix" evidence="18">
    <location>
        <begin position="1381"/>
        <end position="1394"/>
    </location>
</feature>
<feature type="strand" evidence="15">
    <location>
        <begin position="1396"/>
        <end position="1399"/>
    </location>
</feature>
<feature type="strand" evidence="18">
    <location>
        <begin position="1403"/>
        <end position="1409"/>
    </location>
</feature>
<feature type="helix" evidence="18">
    <location>
        <begin position="1422"/>
        <end position="1440"/>
    </location>
</feature>
<feature type="turn" evidence="18">
    <location>
        <begin position="1443"/>
        <end position="1445"/>
    </location>
</feature>
<feature type="helix" evidence="18">
    <location>
        <begin position="1449"/>
        <end position="1464"/>
    </location>
</feature>
<feature type="helix" evidence="18">
    <location>
        <begin position="1469"/>
        <end position="1478"/>
    </location>
</feature>
<feature type="turn" evidence="18">
    <location>
        <begin position="1481"/>
        <end position="1483"/>
    </location>
</feature>
<feature type="helix" evidence="18">
    <location>
        <begin position="1486"/>
        <end position="1491"/>
    </location>
</feature>
<feature type="helix" evidence="18">
    <location>
        <begin position="1493"/>
        <end position="1501"/>
    </location>
</feature>
<feature type="turn" evidence="15">
    <location>
        <begin position="1502"/>
        <end position="1505"/>
    </location>
</feature>
<feature type="helix" evidence="18">
    <location>
        <begin position="1508"/>
        <end position="1520"/>
    </location>
</feature>
<feature type="turn" evidence="18">
    <location>
        <begin position="1523"/>
        <end position="1526"/>
    </location>
</feature>
<feature type="strand" evidence="18">
    <location>
        <begin position="1528"/>
        <end position="1533"/>
    </location>
</feature>
<feature type="strand" evidence="15">
    <location>
        <begin position="1537"/>
        <end position="1541"/>
    </location>
</feature>
<feature type="strand" evidence="18">
    <location>
        <begin position="1543"/>
        <end position="1550"/>
    </location>
</feature>
<feature type="strand" evidence="18">
    <location>
        <begin position="1553"/>
        <end position="1558"/>
    </location>
</feature>
<feature type="turn" evidence="18">
    <location>
        <begin position="1559"/>
        <end position="1562"/>
    </location>
</feature>
<feature type="strand" evidence="18">
    <location>
        <begin position="1563"/>
        <end position="1568"/>
    </location>
</feature>
<feature type="helix" evidence="18">
    <location>
        <begin position="1570"/>
        <end position="1572"/>
    </location>
</feature>
<feature type="strand" evidence="18">
    <location>
        <begin position="1582"/>
        <end position="1588"/>
    </location>
</feature>
<feature type="strand" evidence="18">
    <location>
        <begin position="1594"/>
        <end position="1598"/>
    </location>
</feature>
<feature type="helix" evidence="18">
    <location>
        <begin position="1602"/>
        <end position="1617"/>
    </location>
</feature>
<feature type="strand" evidence="14">
    <location>
        <begin position="1622"/>
        <end position="1627"/>
    </location>
</feature>
<feature type="strand" evidence="14">
    <location>
        <begin position="1633"/>
        <end position="1636"/>
    </location>
</feature>
<feature type="strand" evidence="14">
    <location>
        <begin position="1641"/>
        <end position="1661"/>
    </location>
</feature>
<feature type="strand" evidence="14">
    <location>
        <begin position="1664"/>
        <end position="1669"/>
    </location>
</feature>
<feature type="helix" evidence="14">
    <location>
        <begin position="1670"/>
        <end position="1672"/>
    </location>
</feature>
<feature type="strand" evidence="14">
    <location>
        <begin position="1673"/>
        <end position="1678"/>
    </location>
</feature>
<feature type="helix" evidence="16">
    <location>
        <begin position="1855"/>
        <end position="1861"/>
    </location>
</feature>
<feature type="helix" evidence="16">
    <location>
        <begin position="1865"/>
        <end position="1875"/>
    </location>
</feature>
<feature type="turn" evidence="16">
    <location>
        <begin position="1876"/>
        <end position="1878"/>
    </location>
</feature>
<feature type="helix" evidence="16">
    <location>
        <begin position="1888"/>
        <end position="1892"/>
    </location>
</feature>
<feature type="helix" evidence="16">
    <location>
        <begin position="1908"/>
        <end position="1924"/>
    </location>
</feature>
<feature type="helix" evidence="16">
    <location>
        <begin position="1936"/>
        <end position="1949"/>
    </location>
</feature>
<feature type="helix" evidence="16">
    <location>
        <begin position="1951"/>
        <end position="1953"/>
    </location>
</feature>
<feature type="helix" evidence="16">
    <location>
        <begin position="1954"/>
        <end position="1963"/>
    </location>
</feature>
<feature type="turn" evidence="16">
    <location>
        <begin position="1964"/>
        <end position="1967"/>
    </location>
</feature>
<feature type="helix" evidence="16">
    <location>
        <begin position="1971"/>
        <end position="1987"/>
    </location>
</feature>
<feature type="helix" evidence="16">
    <location>
        <begin position="1992"/>
        <end position="2009"/>
    </location>
</feature>
<feature type="turn" evidence="16">
    <location>
        <begin position="2010"/>
        <end position="2012"/>
    </location>
</feature>
<feature type="helix" evidence="16">
    <location>
        <begin position="2014"/>
        <end position="2028"/>
    </location>
</feature>
<feature type="helix" evidence="16">
    <location>
        <begin position="2034"/>
        <end position="2036"/>
    </location>
</feature>
<feature type="helix" evidence="16">
    <location>
        <begin position="2044"/>
        <end position="2055"/>
    </location>
</feature>
<feature type="strand" evidence="16">
    <location>
        <begin position="2061"/>
        <end position="2065"/>
    </location>
</feature>
<feature type="strand" evidence="16">
    <location>
        <begin position="2071"/>
        <end position="2075"/>
    </location>
</feature>
<feature type="helix" evidence="16">
    <location>
        <begin position="2082"/>
        <end position="2093"/>
    </location>
</feature>
<feature type="helix" evidence="16">
    <location>
        <begin position="2097"/>
        <end position="2102"/>
    </location>
</feature>
<feature type="strand" evidence="16">
    <location>
        <begin position="2103"/>
        <end position="2109"/>
    </location>
</feature>
<feature type="turn" evidence="16">
    <location>
        <begin position="2110"/>
        <end position="2113"/>
    </location>
</feature>
<feature type="strand" evidence="16">
    <location>
        <begin position="2114"/>
        <end position="2117"/>
    </location>
</feature>
<feature type="helix" evidence="16">
    <location>
        <begin position="2124"/>
        <end position="2133"/>
    </location>
</feature>
<feature type="strand" evidence="16">
    <location>
        <begin position="2140"/>
        <end position="2146"/>
    </location>
</feature>
<feature type="helix" evidence="16">
    <location>
        <begin position="2153"/>
        <end position="2158"/>
    </location>
</feature>
<feature type="helix" evidence="16">
    <location>
        <begin position="2161"/>
        <end position="2164"/>
    </location>
</feature>
<feature type="helix" evidence="16">
    <location>
        <begin position="2167"/>
        <end position="2182"/>
    </location>
</feature>
<feature type="helix" evidence="16">
    <location>
        <begin position="2191"/>
        <end position="2205"/>
    </location>
</feature>
<feature type="helix" evidence="16">
    <location>
        <begin position="2216"/>
        <end position="2220"/>
    </location>
</feature>
<feature type="helix" evidence="16">
    <location>
        <begin position="2225"/>
        <end position="2228"/>
    </location>
</feature>
<feature type="helix" evidence="16">
    <location>
        <begin position="2233"/>
        <end position="2244"/>
    </location>
</feature>
<feature type="helix" evidence="16">
    <location>
        <begin position="2252"/>
        <end position="2266"/>
    </location>
</feature>
<feature type="turn" evidence="16">
    <location>
        <begin position="2268"/>
        <end position="2271"/>
    </location>
</feature>
<feature type="strand" evidence="16">
    <location>
        <begin position="2273"/>
        <end position="2278"/>
    </location>
</feature>
<feature type="strand" evidence="16">
    <location>
        <begin position="2280"/>
        <end position="2290"/>
    </location>
</feature>
<feature type="strand" evidence="16">
    <location>
        <begin position="2292"/>
        <end position="2298"/>
    </location>
</feature>
<feature type="turn" evidence="17">
    <location>
        <begin position="2300"/>
        <end position="2302"/>
    </location>
</feature>
<feature type="strand" evidence="16">
    <location>
        <begin position="2305"/>
        <end position="2311"/>
    </location>
</feature>
<feature type="strand" evidence="16">
    <location>
        <begin position="2316"/>
        <end position="2319"/>
    </location>
</feature>
<feature type="strand" evidence="16">
    <location>
        <begin position="2321"/>
        <end position="2328"/>
    </location>
</feature>
<feature type="strand" evidence="17">
    <location>
        <begin position="2329"/>
        <end position="2333"/>
    </location>
</feature>
<feature type="strand" evidence="16">
    <location>
        <begin position="2335"/>
        <end position="2340"/>
    </location>
</feature>
<feature type="helix" evidence="16">
    <location>
        <begin position="2344"/>
        <end position="2355"/>
    </location>
</feature>
<keyword id="KW-0002">3D-structure</keyword>
<keyword id="KW-0009">Actin-binding</keyword>
<keyword id="KW-0067">ATP-binding</keyword>
<keyword id="KW-0175">Coiled coil</keyword>
<keyword id="KW-0963">Cytoplasm</keyword>
<keyword id="KW-0505">Motor protein</keyword>
<keyword id="KW-0518">Myosin</keyword>
<keyword id="KW-0547">Nucleotide-binding</keyword>
<keyword id="KW-1185">Reference proteome</keyword>
<keyword id="KW-0677">Repeat</keyword>
<keyword id="KW-0728">SH3 domain</keyword>
<organism>
    <name type="scientific">Dictyostelium discoideum</name>
    <name type="common">Social amoeba</name>
    <dbReference type="NCBI Taxonomy" id="44689"/>
    <lineage>
        <taxon>Eukaryota</taxon>
        <taxon>Amoebozoa</taxon>
        <taxon>Evosea</taxon>
        <taxon>Eumycetozoa</taxon>
        <taxon>Dictyostelia</taxon>
        <taxon>Dictyosteliales</taxon>
        <taxon>Dictyosteliaceae</taxon>
        <taxon>Dictyostelium</taxon>
    </lineage>
</organism>
<protein>
    <recommendedName>
        <fullName>Myosin-I heavy chain</fullName>
    </recommendedName>
    <alternativeName>
        <fullName>Class VII unconventional myosin</fullName>
    </alternativeName>
    <alternativeName>
        <fullName>DdMVII</fullName>
        <shortName>DdM7</shortName>
    </alternativeName>
</protein>
<dbReference type="EMBL" id="L35321">
    <property type="protein sequence ID" value="AAF06035.1"/>
    <property type="molecule type" value="Genomic_DNA"/>
</dbReference>
<dbReference type="EMBL" id="AAFI02000012">
    <property type="protein sequence ID" value="EAL70120.1"/>
    <property type="molecule type" value="Genomic_DNA"/>
</dbReference>
<dbReference type="EMBL" id="U83089">
    <property type="protein sequence ID" value="AAB40932.1"/>
    <property type="status" value="ALT_INIT"/>
    <property type="molecule type" value="mRNA"/>
</dbReference>
<dbReference type="PIR" id="A59249">
    <property type="entry name" value="A59249"/>
</dbReference>
<dbReference type="RefSeq" id="XP_644171.1">
    <property type="nucleotide sequence ID" value="XM_639079.1"/>
</dbReference>
<dbReference type="PDB" id="2I0N">
    <property type="method" value="NMR"/>
    <property type="chains" value="A=1620-1690"/>
</dbReference>
<dbReference type="PDB" id="5EJQ">
    <property type="method" value="X-ray"/>
    <property type="resolution" value="2.19 A"/>
    <property type="chains" value="A=1119-1620"/>
</dbReference>
<dbReference type="PDB" id="5EJR">
    <property type="method" value="X-ray"/>
    <property type="resolution" value="2.00 A"/>
    <property type="chains" value="A=1851-2357"/>
</dbReference>
<dbReference type="PDB" id="5EJS">
    <property type="method" value="X-ray"/>
    <property type="resolution" value="2.70 A"/>
    <property type="chains" value="A/B=1854-2357"/>
</dbReference>
<dbReference type="PDB" id="5EJY">
    <property type="method" value="X-ray"/>
    <property type="resolution" value="1.90 A"/>
    <property type="chains" value="A=1118-1618"/>
</dbReference>
<dbReference type="PDBsum" id="2I0N"/>
<dbReference type="PDBsum" id="5EJQ"/>
<dbReference type="PDBsum" id="5EJR"/>
<dbReference type="PDBsum" id="5EJS"/>
<dbReference type="PDBsum" id="5EJY"/>
<dbReference type="SMR" id="Q9U1M8"/>
<dbReference type="FunCoup" id="Q9U1M8">
    <property type="interactions" value="3"/>
</dbReference>
<dbReference type="STRING" id="44689.Q9U1M8"/>
<dbReference type="GlyGen" id="Q9U1M8">
    <property type="glycosylation" value="2 sites"/>
</dbReference>
<dbReference type="PaxDb" id="44689-DDB0185049"/>
<dbReference type="EnsemblProtists" id="EAL70120">
    <property type="protein sequence ID" value="EAL70120"/>
    <property type="gene ID" value="DDB_G0274455"/>
</dbReference>
<dbReference type="GeneID" id="8619600"/>
<dbReference type="KEGG" id="ddi:DDB_G0274455"/>
<dbReference type="dictyBase" id="DDB_G0274455">
    <property type="gene designation" value="myoI"/>
</dbReference>
<dbReference type="VEuPathDB" id="AmoebaDB:DDB_G0274455"/>
<dbReference type="eggNOG" id="KOG4229">
    <property type="taxonomic scope" value="Eukaryota"/>
</dbReference>
<dbReference type="HOGENOM" id="CLU_229626_0_0_1"/>
<dbReference type="InParanoid" id="Q9U1M8"/>
<dbReference type="OMA" id="TGFQGRC"/>
<dbReference type="PhylomeDB" id="Q9U1M8"/>
<dbReference type="EvolutionaryTrace" id="Q9U1M8"/>
<dbReference type="PRO" id="PR:Q9U1M8"/>
<dbReference type="Proteomes" id="UP000002195">
    <property type="component" value="Chromosome 2"/>
</dbReference>
<dbReference type="GO" id="GO:0015629">
    <property type="term" value="C:actin cytoskeleton"/>
    <property type="evidence" value="ECO:0000318"/>
    <property type="project" value="GO_Central"/>
</dbReference>
<dbReference type="GO" id="GO:0005938">
    <property type="term" value="C:cell cortex"/>
    <property type="evidence" value="ECO:0000314"/>
    <property type="project" value="dictyBase"/>
</dbReference>
<dbReference type="GO" id="GO:0031252">
    <property type="term" value="C:cell leading edge"/>
    <property type="evidence" value="ECO:0000314"/>
    <property type="project" value="dictyBase"/>
</dbReference>
<dbReference type="GO" id="GO:0005737">
    <property type="term" value="C:cytoplasm"/>
    <property type="evidence" value="ECO:0000318"/>
    <property type="project" value="GO_Central"/>
</dbReference>
<dbReference type="GO" id="GO:0005829">
    <property type="term" value="C:cytosol"/>
    <property type="evidence" value="ECO:0000314"/>
    <property type="project" value="dictyBase"/>
</dbReference>
<dbReference type="GO" id="GO:0030175">
    <property type="term" value="C:filopodium"/>
    <property type="evidence" value="ECO:0000314"/>
    <property type="project" value="dictyBase"/>
</dbReference>
<dbReference type="GO" id="GO:0032433">
    <property type="term" value="C:filopodium tip"/>
    <property type="evidence" value="ECO:0000314"/>
    <property type="project" value="dictyBase"/>
</dbReference>
<dbReference type="GO" id="GO:0016020">
    <property type="term" value="C:membrane"/>
    <property type="evidence" value="ECO:0000314"/>
    <property type="project" value="dictyBase"/>
</dbReference>
<dbReference type="GO" id="GO:0016459">
    <property type="term" value="C:myosin complex"/>
    <property type="evidence" value="ECO:0000250"/>
    <property type="project" value="dictyBase"/>
</dbReference>
<dbReference type="GO" id="GO:0001891">
    <property type="term" value="C:phagocytic cup"/>
    <property type="evidence" value="ECO:0000314"/>
    <property type="project" value="dictyBase"/>
</dbReference>
<dbReference type="GO" id="GO:0003779">
    <property type="term" value="F:actin binding"/>
    <property type="evidence" value="ECO:0000250"/>
    <property type="project" value="dictyBase"/>
</dbReference>
<dbReference type="GO" id="GO:0051015">
    <property type="term" value="F:actin filament binding"/>
    <property type="evidence" value="ECO:0000314"/>
    <property type="project" value="dictyBase"/>
</dbReference>
<dbReference type="GO" id="GO:0005524">
    <property type="term" value="F:ATP binding"/>
    <property type="evidence" value="ECO:0000250"/>
    <property type="project" value="dictyBase"/>
</dbReference>
<dbReference type="GO" id="GO:0003774">
    <property type="term" value="F:cytoskeletal motor activity"/>
    <property type="evidence" value="ECO:0000250"/>
    <property type="project" value="dictyBase"/>
</dbReference>
<dbReference type="GO" id="GO:0000146">
    <property type="term" value="F:microfilament motor activity"/>
    <property type="evidence" value="ECO:0000250"/>
    <property type="project" value="dictyBase"/>
</dbReference>
<dbReference type="GO" id="GO:0008017">
    <property type="term" value="F:microtubule binding"/>
    <property type="evidence" value="ECO:0000314"/>
    <property type="project" value="dictyBase"/>
</dbReference>
<dbReference type="GO" id="GO:0007015">
    <property type="term" value="P:actin filament organization"/>
    <property type="evidence" value="ECO:0000318"/>
    <property type="project" value="GO_Central"/>
</dbReference>
<dbReference type="GO" id="GO:0030048">
    <property type="term" value="P:actin filament-based movement"/>
    <property type="evidence" value="ECO:0000250"/>
    <property type="project" value="dictyBase"/>
</dbReference>
<dbReference type="GO" id="GO:0000902">
    <property type="term" value="P:cell morphogenesis"/>
    <property type="evidence" value="ECO:0000315"/>
    <property type="project" value="dictyBase"/>
</dbReference>
<dbReference type="GO" id="GO:0031589">
    <property type="term" value="P:cell-substrate adhesion"/>
    <property type="evidence" value="ECO:0000315"/>
    <property type="project" value="dictyBase"/>
</dbReference>
<dbReference type="GO" id="GO:0006897">
    <property type="term" value="P:endocytosis"/>
    <property type="evidence" value="ECO:0000318"/>
    <property type="project" value="GO_Central"/>
</dbReference>
<dbReference type="GO" id="GO:0046847">
    <property type="term" value="P:filopodium assembly"/>
    <property type="evidence" value="ECO:0000315"/>
    <property type="project" value="dictyBase"/>
</dbReference>
<dbReference type="GO" id="GO:0006909">
    <property type="term" value="P:phagocytosis"/>
    <property type="evidence" value="ECO:0000315"/>
    <property type="project" value="dictyBase"/>
</dbReference>
<dbReference type="GO" id="GO:0009847">
    <property type="term" value="P:spore germination"/>
    <property type="evidence" value="ECO:0000315"/>
    <property type="project" value="dictyBase"/>
</dbReference>
<dbReference type="CDD" id="cd14473">
    <property type="entry name" value="FERM_B-lobe"/>
    <property type="match status" value="1"/>
</dbReference>
<dbReference type="CDD" id="cd17110">
    <property type="entry name" value="FERM_F1_Myo10_like"/>
    <property type="match status" value="1"/>
</dbReference>
<dbReference type="CDD" id="cd14883">
    <property type="entry name" value="MYSc_Myo22"/>
    <property type="match status" value="1"/>
</dbReference>
<dbReference type="FunFam" id="1.10.10.820:FF:000001">
    <property type="entry name" value="Myosin heavy chain"/>
    <property type="match status" value="1"/>
</dbReference>
<dbReference type="FunFam" id="3.10.20.90:FF:000701">
    <property type="entry name" value="Myosin-G heavy chain"/>
    <property type="match status" value="1"/>
</dbReference>
<dbReference type="Gene3D" id="1.10.10.820">
    <property type="match status" value="1"/>
</dbReference>
<dbReference type="Gene3D" id="1.20.5.4820">
    <property type="match status" value="1"/>
</dbReference>
<dbReference type="Gene3D" id="1.20.58.530">
    <property type="match status" value="1"/>
</dbReference>
<dbReference type="Gene3D" id="1.20.80.10">
    <property type="match status" value="1"/>
</dbReference>
<dbReference type="Gene3D" id="3.40.850.10">
    <property type="entry name" value="Kinesin motor domain"/>
    <property type="match status" value="1"/>
</dbReference>
<dbReference type="Gene3D" id="1.20.120.720">
    <property type="entry name" value="Myosin VI head, motor domain, U50 subdomain"/>
    <property type="match status" value="1"/>
</dbReference>
<dbReference type="Gene3D" id="1.25.40.530">
    <property type="entry name" value="MyTH4 domain"/>
    <property type="match status" value="3"/>
</dbReference>
<dbReference type="Gene3D" id="3.10.20.90">
    <property type="entry name" value="Phosphatidylinositol 3-kinase Catalytic Subunit, Chain A, domain 1"/>
    <property type="match status" value="2"/>
</dbReference>
<dbReference type="Gene3D" id="2.30.29.30">
    <property type="entry name" value="Pleckstrin-homology domain (PH domain)/Phosphotyrosine-binding domain (PTB)"/>
    <property type="match status" value="2"/>
</dbReference>
<dbReference type="Gene3D" id="2.30.30.40">
    <property type="entry name" value="SH3 Domains"/>
    <property type="match status" value="1"/>
</dbReference>
<dbReference type="InterPro" id="IPR051724">
    <property type="entry name" value="Actin_motor_Myosin"/>
</dbReference>
<dbReference type="InterPro" id="IPR019749">
    <property type="entry name" value="Band_41_domain"/>
</dbReference>
<dbReference type="InterPro" id="IPR055159">
    <property type="entry name" value="DdMyo7_FERM"/>
</dbReference>
<dbReference type="InterPro" id="IPR014352">
    <property type="entry name" value="FERM/acyl-CoA-bd_prot_sf"/>
</dbReference>
<dbReference type="InterPro" id="IPR035963">
    <property type="entry name" value="FERM_2"/>
</dbReference>
<dbReference type="InterPro" id="IPR019748">
    <property type="entry name" value="FERM_central"/>
</dbReference>
<dbReference type="InterPro" id="IPR000299">
    <property type="entry name" value="FERM_domain"/>
</dbReference>
<dbReference type="InterPro" id="IPR000048">
    <property type="entry name" value="IQ_motif_EF-hand-BS"/>
</dbReference>
<dbReference type="InterPro" id="IPR002404">
    <property type="entry name" value="IRS_PTB"/>
</dbReference>
<dbReference type="InterPro" id="IPR036961">
    <property type="entry name" value="Kinesin_motor_dom_sf"/>
</dbReference>
<dbReference type="InterPro" id="IPR001609">
    <property type="entry name" value="Myosin_head_motor_dom-like"/>
</dbReference>
<dbReference type="InterPro" id="IPR000857">
    <property type="entry name" value="MyTH4_dom"/>
</dbReference>
<dbReference type="InterPro" id="IPR038185">
    <property type="entry name" value="MyTH4_dom_sf"/>
</dbReference>
<dbReference type="InterPro" id="IPR027417">
    <property type="entry name" value="P-loop_NTPase"/>
</dbReference>
<dbReference type="InterPro" id="IPR011993">
    <property type="entry name" value="PH-like_dom_sf"/>
</dbReference>
<dbReference type="InterPro" id="IPR036028">
    <property type="entry name" value="SH3-like_dom_sf"/>
</dbReference>
<dbReference type="InterPro" id="IPR001452">
    <property type="entry name" value="SH3_domain"/>
</dbReference>
<dbReference type="InterPro" id="IPR029071">
    <property type="entry name" value="Ubiquitin-like_domsf"/>
</dbReference>
<dbReference type="PANTHER" id="PTHR46049">
    <property type="entry name" value="AGAP003327-PA"/>
    <property type="match status" value="1"/>
</dbReference>
<dbReference type="PANTHER" id="PTHR46049:SF5">
    <property type="entry name" value="PLECKSTRIN HOMOLOGY DOMAIN-CONTAINING FAMILY H MEMBER 3"/>
    <property type="match status" value="1"/>
</dbReference>
<dbReference type="Pfam" id="PF22406">
    <property type="entry name" value="DdMyo7_FERM"/>
    <property type="match status" value="1"/>
</dbReference>
<dbReference type="Pfam" id="PF02174">
    <property type="entry name" value="IRS"/>
    <property type="match status" value="1"/>
</dbReference>
<dbReference type="Pfam" id="PF00063">
    <property type="entry name" value="Myosin_head"/>
    <property type="match status" value="1"/>
</dbReference>
<dbReference type="Pfam" id="PF00784">
    <property type="entry name" value="MyTH4"/>
    <property type="match status" value="2"/>
</dbReference>
<dbReference type="Pfam" id="PF21989">
    <property type="entry name" value="RA_2"/>
    <property type="match status" value="2"/>
</dbReference>
<dbReference type="Pfam" id="PF07653">
    <property type="entry name" value="SH3_2"/>
    <property type="match status" value="1"/>
</dbReference>
<dbReference type="PRINTS" id="PR00193">
    <property type="entry name" value="MYOSINHEAVY"/>
</dbReference>
<dbReference type="SMART" id="SM00295">
    <property type="entry name" value="B41"/>
    <property type="match status" value="1"/>
</dbReference>
<dbReference type="SMART" id="SM00015">
    <property type="entry name" value="IQ"/>
    <property type="match status" value="1"/>
</dbReference>
<dbReference type="SMART" id="SM00242">
    <property type="entry name" value="MYSc"/>
    <property type="match status" value="1"/>
</dbReference>
<dbReference type="SMART" id="SM00139">
    <property type="entry name" value="MyTH4"/>
    <property type="match status" value="2"/>
</dbReference>
<dbReference type="SMART" id="SM00326">
    <property type="entry name" value="SH3"/>
    <property type="match status" value="1"/>
</dbReference>
<dbReference type="SUPFAM" id="SSF52540">
    <property type="entry name" value="P-loop containing nucleoside triphosphate hydrolases"/>
    <property type="match status" value="1"/>
</dbReference>
<dbReference type="SUPFAM" id="SSF50729">
    <property type="entry name" value="PH domain-like"/>
    <property type="match status" value="1"/>
</dbReference>
<dbReference type="SUPFAM" id="SSF47031">
    <property type="entry name" value="Second domain of FERM"/>
    <property type="match status" value="2"/>
</dbReference>
<dbReference type="SUPFAM" id="SSF50044">
    <property type="entry name" value="SH3-domain"/>
    <property type="match status" value="1"/>
</dbReference>
<dbReference type="SUPFAM" id="SSF54236">
    <property type="entry name" value="Ubiquitin-like"/>
    <property type="match status" value="1"/>
</dbReference>
<dbReference type="PROSITE" id="PS50057">
    <property type="entry name" value="FERM_3"/>
    <property type="match status" value="2"/>
</dbReference>
<dbReference type="PROSITE" id="PS50096">
    <property type="entry name" value="IQ"/>
    <property type="match status" value="1"/>
</dbReference>
<dbReference type="PROSITE" id="PS51456">
    <property type="entry name" value="MYOSIN_MOTOR"/>
    <property type="match status" value="1"/>
</dbReference>
<dbReference type="PROSITE" id="PS51016">
    <property type="entry name" value="MYTH4"/>
    <property type="match status" value="2"/>
</dbReference>
<dbReference type="PROSITE" id="PS50002">
    <property type="entry name" value="SH3"/>
    <property type="match status" value="1"/>
</dbReference>
<gene>
    <name type="primary">myoI</name>
    <name type="ORF">DDB_G0274455</name>
</gene>
<evidence type="ECO:0000250" key="1"/>
<evidence type="ECO:0000255" key="2"/>
<evidence type="ECO:0000255" key="3">
    <source>
        <dbReference type="PROSITE-ProRule" id="PRU00084"/>
    </source>
</evidence>
<evidence type="ECO:0000255" key="4">
    <source>
        <dbReference type="PROSITE-ProRule" id="PRU00116"/>
    </source>
</evidence>
<evidence type="ECO:0000255" key="5">
    <source>
        <dbReference type="PROSITE-ProRule" id="PRU00192"/>
    </source>
</evidence>
<evidence type="ECO:0000255" key="6">
    <source>
        <dbReference type="PROSITE-ProRule" id="PRU00359"/>
    </source>
</evidence>
<evidence type="ECO:0000255" key="7">
    <source>
        <dbReference type="PROSITE-ProRule" id="PRU00782"/>
    </source>
</evidence>
<evidence type="ECO:0000256" key="8">
    <source>
        <dbReference type="SAM" id="MobiDB-lite"/>
    </source>
</evidence>
<evidence type="ECO:0000269" key="9">
    <source>
    </source>
</evidence>
<evidence type="ECO:0000269" key="10">
    <source>
    </source>
</evidence>
<evidence type="ECO:0000269" key="11">
    <source>
    </source>
</evidence>
<evidence type="ECO:0000269" key="12">
    <source>
    </source>
</evidence>
<evidence type="ECO:0000305" key="13"/>
<evidence type="ECO:0007829" key="14">
    <source>
        <dbReference type="PDB" id="2I0N"/>
    </source>
</evidence>
<evidence type="ECO:0007829" key="15">
    <source>
        <dbReference type="PDB" id="5EJQ"/>
    </source>
</evidence>
<evidence type="ECO:0007829" key="16">
    <source>
        <dbReference type="PDB" id="5EJR"/>
    </source>
</evidence>
<evidence type="ECO:0007829" key="17">
    <source>
        <dbReference type="PDB" id="5EJS"/>
    </source>
</evidence>
<evidence type="ECO:0007829" key="18">
    <source>
        <dbReference type="PDB" id="5EJY"/>
    </source>
</evidence>
<reference key="1">
    <citation type="journal article" date="1999" name="Curr. Biol.">
        <title>A class VII unconventional myosin is required for phagocytosis.</title>
        <authorList>
            <person name="Titus M.A."/>
        </authorList>
    </citation>
    <scope>NUCLEOTIDE SEQUENCE [GENOMIC DNA]</scope>
    <scope>FUNCTION</scope>
    <source>
        <strain>JH10</strain>
    </source>
</reference>
<reference key="2">
    <citation type="journal article" date="2002" name="Nature">
        <title>Sequence and analysis of chromosome 2 of Dictyostelium discoideum.</title>
        <authorList>
            <person name="Gloeckner G."/>
            <person name="Eichinger L."/>
            <person name="Szafranski K."/>
            <person name="Pachebat J.A."/>
            <person name="Bankier A.T."/>
            <person name="Dear P.H."/>
            <person name="Lehmann R."/>
            <person name="Baumgart C."/>
            <person name="Parra G."/>
            <person name="Abril J.F."/>
            <person name="Guigo R."/>
            <person name="Kumpf K."/>
            <person name="Tunggal B."/>
            <person name="Cox E.C."/>
            <person name="Quail M.A."/>
            <person name="Platzer M."/>
            <person name="Rosenthal A."/>
            <person name="Noegel A.A."/>
        </authorList>
    </citation>
    <scope>NUCLEOTIDE SEQUENCE [LARGE SCALE GENOMIC DNA]</scope>
    <source>
        <strain>AX4</strain>
    </source>
</reference>
<reference key="3">
    <citation type="journal article" date="2005" name="Nature">
        <title>The genome of the social amoeba Dictyostelium discoideum.</title>
        <authorList>
            <person name="Eichinger L."/>
            <person name="Pachebat J.A."/>
            <person name="Gloeckner G."/>
            <person name="Rajandream M.A."/>
            <person name="Sucgang R."/>
            <person name="Berriman M."/>
            <person name="Song J."/>
            <person name="Olsen R."/>
            <person name="Szafranski K."/>
            <person name="Xu Q."/>
            <person name="Tunggal B."/>
            <person name="Kummerfeld S."/>
            <person name="Madera M."/>
            <person name="Konfortov B.A."/>
            <person name="Rivero F."/>
            <person name="Bankier A.T."/>
            <person name="Lehmann R."/>
            <person name="Hamlin N."/>
            <person name="Davies R."/>
            <person name="Gaudet P."/>
            <person name="Fey P."/>
            <person name="Pilcher K."/>
            <person name="Chen G."/>
            <person name="Saunders D."/>
            <person name="Sodergren E.J."/>
            <person name="Davis P."/>
            <person name="Kerhornou A."/>
            <person name="Nie X."/>
            <person name="Hall N."/>
            <person name="Anjard C."/>
            <person name="Hemphill L."/>
            <person name="Bason N."/>
            <person name="Farbrother P."/>
            <person name="Desany B."/>
            <person name="Just E."/>
            <person name="Morio T."/>
            <person name="Rost R."/>
            <person name="Churcher C.M."/>
            <person name="Cooper J."/>
            <person name="Haydock S."/>
            <person name="van Driessche N."/>
            <person name="Cronin A."/>
            <person name="Goodhead I."/>
            <person name="Muzny D.M."/>
            <person name="Mourier T."/>
            <person name="Pain A."/>
            <person name="Lu M."/>
            <person name="Harper D."/>
            <person name="Lindsay R."/>
            <person name="Hauser H."/>
            <person name="James K.D."/>
            <person name="Quiles M."/>
            <person name="Madan Babu M."/>
            <person name="Saito T."/>
            <person name="Buchrieser C."/>
            <person name="Wardroper A."/>
            <person name="Felder M."/>
            <person name="Thangavelu M."/>
            <person name="Johnson D."/>
            <person name="Knights A."/>
            <person name="Loulseged H."/>
            <person name="Mungall K.L."/>
            <person name="Oliver K."/>
            <person name="Price C."/>
            <person name="Quail M.A."/>
            <person name="Urushihara H."/>
            <person name="Hernandez J."/>
            <person name="Rabbinowitsch E."/>
            <person name="Steffen D."/>
            <person name="Sanders M."/>
            <person name="Ma J."/>
            <person name="Kohara Y."/>
            <person name="Sharp S."/>
            <person name="Simmonds M.N."/>
            <person name="Spiegler S."/>
            <person name="Tivey A."/>
            <person name="Sugano S."/>
            <person name="White B."/>
            <person name="Walker D."/>
            <person name="Woodward J.R."/>
            <person name="Winckler T."/>
            <person name="Tanaka Y."/>
            <person name="Shaulsky G."/>
            <person name="Schleicher M."/>
            <person name="Weinstock G.M."/>
            <person name="Rosenthal A."/>
            <person name="Cox E.C."/>
            <person name="Chisholm R.L."/>
            <person name="Gibbs R.A."/>
            <person name="Loomis W.F."/>
            <person name="Platzer M."/>
            <person name="Kay R.R."/>
            <person name="Williams J.G."/>
            <person name="Dear P.H."/>
            <person name="Noegel A.A."/>
            <person name="Barrell B.G."/>
            <person name="Kuspa A."/>
        </authorList>
    </citation>
    <scope>NUCLEOTIDE SEQUENCE [LARGE SCALE GENOMIC DNA]</scope>
    <source>
        <strain>AX4</strain>
    </source>
</reference>
<reference key="4">
    <citation type="submission" date="1996-12" db="EMBL/GenBank/DDBJ databases">
        <authorList>
            <person name="Iranfar N."/>
            <person name="Loomis W.F."/>
        </authorList>
    </citation>
    <scope>NUCLEOTIDE SEQUENCE [MRNA] OF 1783-2357</scope>
    <source>
        <strain>AX4</strain>
    </source>
</reference>
<reference key="5">
    <citation type="journal article" date="2001" name="Curr. Biol.">
        <title>A role for myosin VII in dynamic cell adhesion.</title>
        <authorList>
            <person name="Tuxworth R.I."/>
            <person name="Weber I."/>
            <person name="Wessels D."/>
            <person name="Addicks G.C."/>
            <person name="Soll D.R."/>
            <person name="Gerisch G."/>
            <person name="Titus M.A."/>
        </authorList>
    </citation>
    <scope>FUNCTION</scope>
    <scope>SUBCELLULAR LOCATION</scope>
</reference>
<reference key="6">
    <citation type="journal article" date="2005" name="J. Biol. Chem.">
        <title>Identification of a myosin VII-talin complex.</title>
        <authorList>
            <person name="Tuxworth R.I."/>
            <person name="Stephens S."/>
            <person name="Ryan Z.C."/>
            <person name="Titus M.A."/>
        </authorList>
    </citation>
    <scope>FUNCTION</scope>
    <scope>INTERACTION WITH TALA</scope>
    <scope>SUBUNIT</scope>
</reference>
<reference key="7">
    <citation type="journal article" date="2006" name="BMC Genomics">
        <title>Thirteen is enough: the myosins of Dictyostelium discoideum and their light chains.</title>
        <authorList>
            <person name="Kollmar M."/>
        </authorList>
    </citation>
    <scope>NOMENCLATURE</scope>
</reference>
<reference key="8">
    <citation type="journal article" date="2007" name="Mol. Biol. Cell">
        <title>Talin influences the dynamics of the myosin VII-membrane interaction.</title>
        <authorList>
            <person name="Galdeen S.A."/>
            <person name="Stephens S."/>
            <person name="Thomas D.D."/>
            <person name="Titus M.A."/>
        </authorList>
    </citation>
    <scope>DOMAIN</scope>
    <scope>INTERACTION WITH TALA</scope>
</reference>
<reference key="9">
    <citation type="journal article" date="2007" name="Protein Sci.">
        <title>The SH3 domain of a M7 interacts with its C-terminal proline-rich region.</title>
        <authorList>
            <person name="Wang Q."/>
            <person name="Deloia M.A."/>
            <person name="Kang Y."/>
            <person name="Litchke C."/>
            <person name="Zhang N."/>
            <person name="Titus M.A."/>
            <person name="Walters K.J."/>
        </authorList>
    </citation>
    <scope>STRUCTURE BY NMR OF 1620-1690</scope>
</reference>
<accession>Q9U1M8</accession>
<accession>P90536</accession>
<accession>Q555A2</accession>
<accession>Q869S1</accession>